<accession>B5E6K0</accession>
<organism>
    <name type="scientific">Streptococcus pneumoniae serotype 19F (strain G54)</name>
    <dbReference type="NCBI Taxonomy" id="512566"/>
    <lineage>
        <taxon>Bacteria</taxon>
        <taxon>Bacillati</taxon>
        <taxon>Bacillota</taxon>
        <taxon>Bacilli</taxon>
        <taxon>Lactobacillales</taxon>
        <taxon>Streptococcaceae</taxon>
        <taxon>Streptococcus</taxon>
    </lineage>
</organism>
<dbReference type="EC" id="1.17.1.8" evidence="1"/>
<dbReference type="EMBL" id="CP001015">
    <property type="protein sequence ID" value="ACF54821.1"/>
    <property type="molecule type" value="Genomic_DNA"/>
</dbReference>
<dbReference type="SMR" id="B5E6K0"/>
<dbReference type="KEGG" id="spx:SPG_1483"/>
<dbReference type="HOGENOM" id="CLU_047479_0_1_9"/>
<dbReference type="UniPathway" id="UPA00034">
    <property type="reaction ID" value="UER00018"/>
</dbReference>
<dbReference type="GO" id="GO:0005829">
    <property type="term" value="C:cytosol"/>
    <property type="evidence" value="ECO:0007669"/>
    <property type="project" value="TreeGrafter"/>
</dbReference>
<dbReference type="GO" id="GO:0008839">
    <property type="term" value="F:4-hydroxy-tetrahydrodipicolinate reductase"/>
    <property type="evidence" value="ECO:0007669"/>
    <property type="project" value="UniProtKB-EC"/>
</dbReference>
<dbReference type="GO" id="GO:0051287">
    <property type="term" value="F:NAD binding"/>
    <property type="evidence" value="ECO:0007669"/>
    <property type="project" value="UniProtKB-UniRule"/>
</dbReference>
<dbReference type="GO" id="GO:0050661">
    <property type="term" value="F:NADP binding"/>
    <property type="evidence" value="ECO:0007669"/>
    <property type="project" value="UniProtKB-UniRule"/>
</dbReference>
<dbReference type="GO" id="GO:0016726">
    <property type="term" value="F:oxidoreductase activity, acting on CH or CH2 groups, NAD or NADP as acceptor"/>
    <property type="evidence" value="ECO:0007669"/>
    <property type="project" value="UniProtKB-UniRule"/>
</dbReference>
<dbReference type="GO" id="GO:0019877">
    <property type="term" value="P:diaminopimelate biosynthetic process"/>
    <property type="evidence" value="ECO:0007669"/>
    <property type="project" value="UniProtKB-UniRule"/>
</dbReference>
<dbReference type="GO" id="GO:0009089">
    <property type="term" value="P:lysine biosynthetic process via diaminopimelate"/>
    <property type="evidence" value="ECO:0007669"/>
    <property type="project" value="UniProtKB-UniRule"/>
</dbReference>
<dbReference type="CDD" id="cd02274">
    <property type="entry name" value="DHDPR_N"/>
    <property type="match status" value="1"/>
</dbReference>
<dbReference type="FunFam" id="3.30.360.10:FF:000009">
    <property type="entry name" value="4-hydroxy-tetrahydrodipicolinate reductase"/>
    <property type="match status" value="1"/>
</dbReference>
<dbReference type="Gene3D" id="3.30.360.10">
    <property type="entry name" value="Dihydrodipicolinate Reductase, domain 2"/>
    <property type="match status" value="1"/>
</dbReference>
<dbReference type="Gene3D" id="3.40.50.720">
    <property type="entry name" value="NAD(P)-binding Rossmann-like Domain"/>
    <property type="match status" value="1"/>
</dbReference>
<dbReference type="HAMAP" id="MF_00102">
    <property type="entry name" value="DapB"/>
    <property type="match status" value="1"/>
</dbReference>
<dbReference type="InterPro" id="IPR022663">
    <property type="entry name" value="DapB_C"/>
</dbReference>
<dbReference type="InterPro" id="IPR000846">
    <property type="entry name" value="DapB_N"/>
</dbReference>
<dbReference type="InterPro" id="IPR022664">
    <property type="entry name" value="DapB_N_CS"/>
</dbReference>
<dbReference type="InterPro" id="IPR023940">
    <property type="entry name" value="DHDPR_bac"/>
</dbReference>
<dbReference type="InterPro" id="IPR036291">
    <property type="entry name" value="NAD(P)-bd_dom_sf"/>
</dbReference>
<dbReference type="NCBIfam" id="TIGR00036">
    <property type="entry name" value="dapB"/>
    <property type="match status" value="1"/>
</dbReference>
<dbReference type="PANTHER" id="PTHR20836:SF0">
    <property type="entry name" value="4-HYDROXY-TETRAHYDRODIPICOLINATE REDUCTASE 1, CHLOROPLASTIC-RELATED"/>
    <property type="match status" value="1"/>
</dbReference>
<dbReference type="PANTHER" id="PTHR20836">
    <property type="entry name" value="DIHYDRODIPICOLINATE REDUCTASE"/>
    <property type="match status" value="1"/>
</dbReference>
<dbReference type="Pfam" id="PF05173">
    <property type="entry name" value="DapB_C"/>
    <property type="match status" value="1"/>
</dbReference>
<dbReference type="Pfam" id="PF01113">
    <property type="entry name" value="DapB_N"/>
    <property type="match status" value="1"/>
</dbReference>
<dbReference type="PIRSF" id="PIRSF000161">
    <property type="entry name" value="DHPR"/>
    <property type="match status" value="1"/>
</dbReference>
<dbReference type="SUPFAM" id="SSF55347">
    <property type="entry name" value="Glyceraldehyde-3-phosphate dehydrogenase-like, C-terminal domain"/>
    <property type="match status" value="1"/>
</dbReference>
<dbReference type="SUPFAM" id="SSF51735">
    <property type="entry name" value="NAD(P)-binding Rossmann-fold domains"/>
    <property type="match status" value="1"/>
</dbReference>
<dbReference type="PROSITE" id="PS01298">
    <property type="entry name" value="DAPB"/>
    <property type="match status" value="1"/>
</dbReference>
<protein>
    <recommendedName>
        <fullName evidence="1">4-hydroxy-tetrahydrodipicolinate reductase</fullName>
        <shortName evidence="1">HTPA reductase</shortName>
        <ecNumber evidence="1">1.17.1.8</ecNumber>
    </recommendedName>
</protein>
<sequence length="255" mass="27895">MSIRVIIAGFKGKMGQAACQMVLTDPDLDLVAVLDPFESESEWQDIPVFKDKADLAGFEADVWVDFTTPAVAYENTRFALENGFAPVVGTTGFTSEEIAELKEFSRAQDLGGLIAPNFALGAVLLMQFATQAAKYFPNVEIIELHHDKKKDAPSGTAIKTAELMAEVRESIQQGAADEEELIAGARGADFDGMRIHSVRLPGLVAHQEVIFGNQGEGLTLRHDSYDRISFMTGVNLGIKEVVKRHELVYGLEHLL</sequence>
<keyword id="KW-0028">Amino-acid biosynthesis</keyword>
<keyword id="KW-0963">Cytoplasm</keyword>
<keyword id="KW-0220">Diaminopimelate biosynthesis</keyword>
<keyword id="KW-0457">Lysine biosynthesis</keyword>
<keyword id="KW-0520">NAD</keyword>
<keyword id="KW-0521">NADP</keyword>
<keyword id="KW-0560">Oxidoreductase</keyword>
<evidence type="ECO:0000255" key="1">
    <source>
        <dbReference type="HAMAP-Rule" id="MF_00102"/>
    </source>
</evidence>
<evidence type="ECO:0000305" key="2"/>
<name>DAPB_STRP4</name>
<comment type="function">
    <text evidence="1">Catalyzes the conversion of 4-hydroxy-tetrahydrodipicolinate (HTPA) to tetrahydrodipicolinate.</text>
</comment>
<comment type="catalytic activity">
    <reaction evidence="1">
        <text>(S)-2,3,4,5-tetrahydrodipicolinate + NAD(+) + H2O = (2S,4S)-4-hydroxy-2,3,4,5-tetrahydrodipicolinate + NADH + H(+)</text>
        <dbReference type="Rhea" id="RHEA:35323"/>
        <dbReference type="ChEBI" id="CHEBI:15377"/>
        <dbReference type="ChEBI" id="CHEBI:15378"/>
        <dbReference type="ChEBI" id="CHEBI:16845"/>
        <dbReference type="ChEBI" id="CHEBI:57540"/>
        <dbReference type="ChEBI" id="CHEBI:57945"/>
        <dbReference type="ChEBI" id="CHEBI:67139"/>
        <dbReference type="EC" id="1.17.1.8"/>
    </reaction>
</comment>
<comment type="catalytic activity">
    <reaction evidence="1">
        <text>(S)-2,3,4,5-tetrahydrodipicolinate + NADP(+) + H2O = (2S,4S)-4-hydroxy-2,3,4,5-tetrahydrodipicolinate + NADPH + H(+)</text>
        <dbReference type="Rhea" id="RHEA:35331"/>
        <dbReference type="ChEBI" id="CHEBI:15377"/>
        <dbReference type="ChEBI" id="CHEBI:15378"/>
        <dbReference type="ChEBI" id="CHEBI:16845"/>
        <dbReference type="ChEBI" id="CHEBI:57783"/>
        <dbReference type="ChEBI" id="CHEBI:58349"/>
        <dbReference type="ChEBI" id="CHEBI:67139"/>
        <dbReference type="EC" id="1.17.1.8"/>
    </reaction>
</comment>
<comment type="pathway">
    <text evidence="1">Amino-acid biosynthesis; L-lysine biosynthesis via DAP pathway; (S)-tetrahydrodipicolinate from L-aspartate: step 4/4.</text>
</comment>
<comment type="subcellular location">
    <subcellularLocation>
        <location evidence="1">Cytoplasm</location>
    </subcellularLocation>
</comment>
<comment type="similarity">
    <text evidence="1">Belongs to the DapB family.</text>
</comment>
<comment type="caution">
    <text evidence="2">Was originally thought to be a dihydrodipicolinate reductase (DHDPR), catalyzing the conversion of dihydrodipicolinate to tetrahydrodipicolinate. However, it was shown in E.coli that the substrate of the enzymatic reaction is not dihydrodipicolinate (DHDP) but in fact (2S,4S)-4-hydroxy-2,3,4,5-tetrahydrodipicolinic acid (HTPA), the product released by the DapA-catalyzed reaction.</text>
</comment>
<gene>
    <name evidence="1" type="primary">dapB</name>
    <name type="ordered locus">SPG_1483</name>
</gene>
<feature type="chain" id="PRO_1000094012" description="4-hydroxy-tetrahydrodipicolinate reductase">
    <location>
        <begin position="1"/>
        <end position="255"/>
    </location>
</feature>
<feature type="active site" description="Proton donor/acceptor" evidence="1">
    <location>
        <position position="145"/>
    </location>
</feature>
<feature type="active site" description="Proton donor" evidence="1">
    <location>
        <position position="149"/>
    </location>
</feature>
<feature type="binding site" evidence="1">
    <location>
        <begin position="9"/>
        <end position="14"/>
    </location>
    <ligand>
        <name>NAD(+)</name>
        <dbReference type="ChEBI" id="CHEBI:57540"/>
    </ligand>
</feature>
<feature type="binding site" evidence="1">
    <location>
        <position position="35"/>
    </location>
    <ligand>
        <name>NAD(+)</name>
        <dbReference type="ChEBI" id="CHEBI:57540"/>
    </ligand>
</feature>
<feature type="binding site" evidence="1">
    <location>
        <begin position="89"/>
        <end position="91"/>
    </location>
    <ligand>
        <name>NAD(+)</name>
        <dbReference type="ChEBI" id="CHEBI:57540"/>
    </ligand>
</feature>
<feature type="binding site" evidence="1">
    <location>
        <begin position="115"/>
        <end position="118"/>
    </location>
    <ligand>
        <name>NAD(+)</name>
        <dbReference type="ChEBI" id="CHEBI:57540"/>
    </ligand>
</feature>
<feature type="binding site" evidence="1">
    <location>
        <position position="146"/>
    </location>
    <ligand>
        <name>(S)-2,3,4,5-tetrahydrodipicolinate</name>
        <dbReference type="ChEBI" id="CHEBI:16845"/>
    </ligand>
</feature>
<feature type="binding site" evidence="1">
    <location>
        <begin position="155"/>
        <end position="156"/>
    </location>
    <ligand>
        <name>(S)-2,3,4,5-tetrahydrodipicolinate</name>
        <dbReference type="ChEBI" id="CHEBI:16845"/>
    </ligand>
</feature>
<proteinExistence type="inferred from homology"/>
<reference key="1">
    <citation type="journal article" date="2001" name="Microb. Drug Resist.">
        <title>Annotated draft genomic sequence from a Streptococcus pneumoniae type 19F clinical isolate.</title>
        <authorList>
            <person name="Dopazo J."/>
            <person name="Mendoza A."/>
            <person name="Herrero J."/>
            <person name="Caldara F."/>
            <person name="Humbert Y."/>
            <person name="Friedli L."/>
            <person name="Guerrier M."/>
            <person name="Grand-Schenk E."/>
            <person name="Gandin C."/>
            <person name="de Francesco M."/>
            <person name="Polissi A."/>
            <person name="Buell G."/>
            <person name="Feger G."/>
            <person name="Garcia E."/>
            <person name="Peitsch M."/>
            <person name="Garcia-Bustos J.F."/>
        </authorList>
    </citation>
    <scope>NUCLEOTIDE SEQUENCE [LARGE SCALE GENOMIC DNA]</scope>
    <source>
        <strain>G54</strain>
    </source>
</reference>
<reference key="2">
    <citation type="submission" date="2008-03" db="EMBL/GenBank/DDBJ databases">
        <title>Pneumococcal beta glucoside metabolism investigated by whole genome comparison.</title>
        <authorList>
            <person name="Mulas L."/>
            <person name="Trappetti C."/>
            <person name="Hakenbeck R."/>
            <person name="Iannelli F."/>
            <person name="Pozzi G."/>
            <person name="Davidsen T.M."/>
            <person name="Tettelin H."/>
            <person name="Oggioni M."/>
        </authorList>
    </citation>
    <scope>NUCLEOTIDE SEQUENCE [LARGE SCALE GENOMIC DNA]</scope>
    <source>
        <strain>G54</strain>
    </source>
</reference>